<comment type="function">
    <text evidence="1">Converts cobyric acid to cobinamide by the addition of aminopropanol on the F carboxylic group.</text>
</comment>
<comment type="pathway">
    <text evidence="1">Cofactor biosynthesis; adenosylcobalamin biosynthesis.</text>
</comment>
<comment type="subcellular location">
    <subcellularLocation>
        <location evidence="1">Cell membrane</location>
        <topology evidence="1">Multi-pass membrane protein</topology>
    </subcellularLocation>
</comment>
<comment type="similarity">
    <text evidence="1">Belongs to the CobD/CbiB family.</text>
</comment>
<feature type="chain" id="PRO_0000150927" description="Cobalamin biosynthesis protein CobD">
    <location>
        <begin position="1"/>
        <end position="315"/>
    </location>
</feature>
<feature type="transmembrane region" description="Helical" evidence="1">
    <location>
        <begin position="48"/>
        <end position="70"/>
    </location>
</feature>
<feature type="transmembrane region" description="Helical" evidence="1">
    <location>
        <begin position="75"/>
        <end position="94"/>
    </location>
</feature>
<feature type="transmembrane region" description="Helical" evidence="1">
    <location>
        <begin position="148"/>
        <end position="170"/>
    </location>
</feature>
<feature type="transmembrane region" description="Helical" evidence="1">
    <location>
        <begin position="208"/>
        <end position="230"/>
    </location>
</feature>
<feature type="transmembrane region" description="Helical" evidence="1">
    <location>
        <begin position="292"/>
        <end position="314"/>
    </location>
</feature>
<organism>
    <name type="scientific">Leptospira interrogans serogroup Icterohaemorrhagiae serovar copenhageni (strain Fiocruz L1-130)</name>
    <dbReference type="NCBI Taxonomy" id="267671"/>
    <lineage>
        <taxon>Bacteria</taxon>
        <taxon>Pseudomonadati</taxon>
        <taxon>Spirochaetota</taxon>
        <taxon>Spirochaetia</taxon>
        <taxon>Leptospirales</taxon>
        <taxon>Leptospiraceae</taxon>
        <taxon>Leptospira</taxon>
    </lineage>
</organism>
<accession>Q75FR2</accession>
<keyword id="KW-1003">Cell membrane</keyword>
<keyword id="KW-0169">Cobalamin biosynthesis</keyword>
<keyword id="KW-0472">Membrane</keyword>
<keyword id="KW-0812">Transmembrane</keyword>
<keyword id="KW-1133">Transmembrane helix</keyword>
<reference key="1">
    <citation type="journal article" date="2004" name="J. Bacteriol.">
        <title>Comparative genomics of two Leptospira interrogans serovars reveals novel insights into physiology and pathogenesis.</title>
        <authorList>
            <person name="Nascimento A.L.T.O."/>
            <person name="Ko A.I."/>
            <person name="Martins E.A.L."/>
            <person name="Monteiro-Vitorello C.B."/>
            <person name="Ho P.L."/>
            <person name="Haake D.A."/>
            <person name="Verjovski-Almeida S."/>
            <person name="Hartskeerl R.A."/>
            <person name="Marques M.V."/>
            <person name="Oliveira M.C."/>
            <person name="Menck C.F.M."/>
            <person name="Leite L.C.C."/>
            <person name="Carrer H."/>
            <person name="Coutinho L.L."/>
            <person name="Degrave W.M."/>
            <person name="Dellagostin O.A."/>
            <person name="El-Dorry H."/>
            <person name="Ferro E.S."/>
            <person name="Ferro M.I.T."/>
            <person name="Furlan L.R."/>
            <person name="Gamberini M."/>
            <person name="Giglioti E.A."/>
            <person name="Goes-Neto A."/>
            <person name="Goldman G.H."/>
            <person name="Goldman M.H.S."/>
            <person name="Harakava R."/>
            <person name="Jeronimo S.M.B."/>
            <person name="Junqueira-de-Azevedo I.L.M."/>
            <person name="Kimura E.T."/>
            <person name="Kuramae E.E."/>
            <person name="Lemos E.G.M."/>
            <person name="Lemos M.V.F."/>
            <person name="Marino C.L."/>
            <person name="Nunes L.R."/>
            <person name="de Oliveira R.C."/>
            <person name="Pereira G.G."/>
            <person name="Reis M.S."/>
            <person name="Schriefer A."/>
            <person name="Siqueira W.J."/>
            <person name="Sommer P."/>
            <person name="Tsai S.M."/>
            <person name="Simpson A.J.G."/>
            <person name="Ferro J.A."/>
            <person name="Camargo L.E.A."/>
            <person name="Kitajima J.P."/>
            <person name="Setubal J.C."/>
            <person name="Van Sluys M.A."/>
        </authorList>
    </citation>
    <scope>NUCLEOTIDE SEQUENCE [LARGE SCALE GENOMIC DNA]</scope>
    <source>
        <strain>Fiocruz L1-130</strain>
    </source>
</reference>
<protein>
    <recommendedName>
        <fullName evidence="1">Cobalamin biosynthesis protein CobD</fullName>
    </recommendedName>
</protein>
<proteinExistence type="inferred from homology"/>
<sequence length="315" mass="35179">MPWGIAISILVDLILGDPKDLPHPVRAIGKLARALEKFFRNNCSSEEIAGILTSCLVYLISFIIPFLSVQFANQLHWILGELLSIMIIYTTIAIRDMIDHSKEVYDALVQTNLPLARKKVSKIVARDTENLSESEIIRACVESTAENLVDGITTPLFYAVFGGPAWAMLYRSINTLDSLFGYKNKKYLRFGSFPARIDDLANYLPARITSYILVLSSLFLGYNFKNSLYILQRDGKKHPSPNSGLTEAAVAGALEIQLGGVNLYSGVQNIKPKLGDPKKEFQIEQILQTNKLILLSSILTFIFYILIYSGAAYFL</sequence>
<dbReference type="EMBL" id="AE016824">
    <property type="protein sequence ID" value="AAS72148.1"/>
    <property type="molecule type" value="Genomic_DNA"/>
</dbReference>
<dbReference type="KEGG" id="lic:LIC_20120"/>
<dbReference type="HOGENOM" id="CLU_054212_0_0_12"/>
<dbReference type="UniPathway" id="UPA00148"/>
<dbReference type="Proteomes" id="UP000007037">
    <property type="component" value="Chromosome II"/>
</dbReference>
<dbReference type="GO" id="GO:0005886">
    <property type="term" value="C:plasma membrane"/>
    <property type="evidence" value="ECO:0007669"/>
    <property type="project" value="UniProtKB-SubCell"/>
</dbReference>
<dbReference type="GO" id="GO:0015420">
    <property type="term" value="F:ABC-type vitamin B12 transporter activity"/>
    <property type="evidence" value="ECO:0007669"/>
    <property type="project" value="UniProtKB-UniRule"/>
</dbReference>
<dbReference type="GO" id="GO:0048472">
    <property type="term" value="F:threonine-phosphate decarboxylase activity"/>
    <property type="evidence" value="ECO:0007669"/>
    <property type="project" value="InterPro"/>
</dbReference>
<dbReference type="GO" id="GO:0009236">
    <property type="term" value="P:cobalamin biosynthetic process"/>
    <property type="evidence" value="ECO:0007669"/>
    <property type="project" value="UniProtKB-UniRule"/>
</dbReference>
<dbReference type="HAMAP" id="MF_00024">
    <property type="entry name" value="CobD_CbiB"/>
    <property type="match status" value="1"/>
</dbReference>
<dbReference type="InterPro" id="IPR004485">
    <property type="entry name" value="Cobalamin_biosynth_CobD/CbiB"/>
</dbReference>
<dbReference type="NCBIfam" id="TIGR00380">
    <property type="entry name" value="cobal_cbiB"/>
    <property type="match status" value="1"/>
</dbReference>
<dbReference type="PANTHER" id="PTHR34308">
    <property type="entry name" value="COBALAMIN BIOSYNTHESIS PROTEIN CBIB"/>
    <property type="match status" value="1"/>
</dbReference>
<dbReference type="PANTHER" id="PTHR34308:SF1">
    <property type="entry name" value="COBALAMIN BIOSYNTHESIS PROTEIN CBIB"/>
    <property type="match status" value="1"/>
</dbReference>
<dbReference type="Pfam" id="PF03186">
    <property type="entry name" value="CobD_Cbib"/>
    <property type="match status" value="1"/>
</dbReference>
<gene>
    <name evidence="1" type="primary">cobD</name>
    <name type="ordered locus">LIC_20120</name>
</gene>
<evidence type="ECO:0000255" key="1">
    <source>
        <dbReference type="HAMAP-Rule" id="MF_00024"/>
    </source>
</evidence>
<name>COBD_LEPIC</name>